<proteinExistence type="inferred from homology"/>
<keyword id="KW-0227">DNA damage</keyword>
<keyword id="KW-0234">DNA repair</keyword>
<keyword id="KW-0238">DNA-binding</keyword>
<keyword id="KW-0326">Glycosidase</keyword>
<keyword id="KW-0378">Hydrolase</keyword>
<keyword id="KW-0456">Lyase</keyword>
<keyword id="KW-0479">Metal-binding</keyword>
<keyword id="KW-0511">Multifunctional enzyme</keyword>
<keyword id="KW-0862">Zinc</keyword>
<keyword id="KW-0863">Zinc-finger</keyword>
<name>FPG_STRP8</name>
<reference key="1">
    <citation type="journal article" date="2002" name="Proc. Natl. Acad. Sci. U.S.A.">
        <title>Genome sequence and comparative microarray analysis of serotype M18 group A Streptococcus strains associated with acute rheumatic fever outbreaks.</title>
        <authorList>
            <person name="Smoot J.C."/>
            <person name="Barbian K.D."/>
            <person name="Van Gompel J.J."/>
            <person name="Smoot L.M."/>
            <person name="Chaussee M.S."/>
            <person name="Sylva G.L."/>
            <person name="Sturdevant D.E."/>
            <person name="Ricklefs S.M."/>
            <person name="Porcella S.F."/>
            <person name="Parkins L.D."/>
            <person name="Beres S.B."/>
            <person name="Campbell D.S."/>
            <person name="Smith T.M."/>
            <person name="Zhang Q."/>
            <person name="Kapur V."/>
            <person name="Daly J.A."/>
            <person name="Veasy L.G."/>
            <person name="Musser J.M."/>
        </authorList>
    </citation>
    <scope>NUCLEOTIDE SEQUENCE [LARGE SCALE GENOMIC DNA]</scope>
    <source>
        <strain>MGAS8232</strain>
    </source>
</reference>
<organism>
    <name type="scientific">Streptococcus pyogenes serotype M18 (strain MGAS8232)</name>
    <dbReference type="NCBI Taxonomy" id="186103"/>
    <lineage>
        <taxon>Bacteria</taxon>
        <taxon>Bacillati</taxon>
        <taxon>Bacillota</taxon>
        <taxon>Bacilli</taxon>
        <taxon>Lactobacillales</taxon>
        <taxon>Streptococcaceae</taxon>
        <taxon>Streptococcus</taxon>
    </lineage>
</organism>
<dbReference type="EC" id="3.2.2.23" evidence="2"/>
<dbReference type="EC" id="4.2.99.18" evidence="2"/>
<dbReference type="EMBL" id="AE009949">
    <property type="protein sequence ID" value="AAL97251.1"/>
    <property type="molecule type" value="Genomic_DNA"/>
</dbReference>
<dbReference type="RefSeq" id="WP_002990742.1">
    <property type="nucleotide sequence ID" value="NC_003485.1"/>
</dbReference>
<dbReference type="SMR" id="Q8P250"/>
<dbReference type="KEGG" id="spm:spyM18_0555"/>
<dbReference type="HOGENOM" id="CLU_038423_1_2_9"/>
<dbReference type="GO" id="GO:0034039">
    <property type="term" value="F:8-oxo-7,8-dihydroguanine DNA N-glycosylase activity"/>
    <property type="evidence" value="ECO:0007669"/>
    <property type="project" value="TreeGrafter"/>
</dbReference>
<dbReference type="GO" id="GO:0140078">
    <property type="term" value="F:class I DNA-(apurinic or apyrimidinic site) endonuclease activity"/>
    <property type="evidence" value="ECO:0007669"/>
    <property type="project" value="UniProtKB-EC"/>
</dbReference>
<dbReference type="GO" id="GO:0003684">
    <property type="term" value="F:damaged DNA binding"/>
    <property type="evidence" value="ECO:0007669"/>
    <property type="project" value="InterPro"/>
</dbReference>
<dbReference type="GO" id="GO:0008270">
    <property type="term" value="F:zinc ion binding"/>
    <property type="evidence" value="ECO:0007669"/>
    <property type="project" value="UniProtKB-UniRule"/>
</dbReference>
<dbReference type="GO" id="GO:0006284">
    <property type="term" value="P:base-excision repair"/>
    <property type="evidence" value="ECO:0007669"/>
    <property type="project" value="InterPro"/>
</dbReference>
<dbReference type="CDD" id="cd08966">
    <property type="entry name" value="EcFpg-like_N"/>
    <property type="match status" value="1"/>
</dbReference>
<dbReference type="FunFam" id="1.10.8.50:FF:000003">
    <property type="entry name" value="Formamidopyrimidine-DNA glycosylase"/>
    <property type="match status" value="1"/>
</dbReference>
<dbReference type="FunFam" id="3.20.190.10:FF:000001">
    <property type="entry name" value="Formamidopyrimidine-DNA glycosylase"/>
    <property type="match status" value="1"/>
</dbReference>
<dbReference type="Gene3D" id="1.10.8.50">
    <property type="match status" value="1"/>
</dbReference>
<dbReference type="Gene3D" id="3.20.190.10">
    <property type="entry name" value="MutM-like, N-terminal"/>
    <property type="match status" value="1"/>
</dbReference>
<dbReference type="HAMAP" id="MF_00103">
    <property type="entry name" value="Fapy_DNA_glycosyl"/>
    <property type="match status" value="1"/>
</dbReference>
<dbReference type="InterPro" id="IPR015886">
    <property type="entry name" value="DNA_glyclase/AP_lyase_DNA-bd"/>
</dbReference>
<dbReference type="InterPro" id="IPR015887">
    <property type="entry name" value="DNA_glyclase_Znf_dom_DNA_BS"/>
</dbReference>
<dbReference type="InterPro" id="IPR020629">
    <property type="entry name" value="Formamido-pyr_DNA_Glyclase"/>
</dbReference>
<dbReference type="InterPro" id="IPR012319">
    <property type="entry name" value="FPG_cat"/>
</dbReference>
<dbReference type="InterPro" id="IPR035937">
    <property type="entry name" value="MutM-like_N-ter"/>
</dbReference>
<dbReference type="InterPro" id="IPR010979">
    <property type="entry name" value="Ribosomal_uS13-like_H2TH"/>
</dbReference>
<dbReference type="InterPro" id="IPR000214">
    <property type="entry name" value="Znf_DNA_glyclase/AP_lyase"/>
</dbReference>
<dbReference type="InterPro" id="IPR010663">
    <property type="entry name" value="Znf_FPG/IleRS"/>
</dbReference>
<dbReference type="NCBIfam" id="TIGR00577">
    <property type="entry name" value="fpg"/>
    <property type="match status" value="1"/>
</dbReference>
<dbReference type="NCBIfam" id="NF002211">
    <property type="entry name" value="PRK01103.1"/>
    <property type="match status" value="1"/>
</dbReference>
<dbReference type="PANTHER" id="PTHR22993">
    <property type="entry name" value="FORMAMIDOPYRIMIDINE-DNA GLYCOSYLASE"/>
    <property type="match status" value="1"/>
</dbReference>
<dbReference type="PANTHER" id="PTHR22993:SF9">
    <property type="entry name" value="FORMAMIDOPYRIMIDINE-DNA GLYCOSYLASE"/>
    <property type="match status" value="1"/>
</dbReference>
<dbReference type="Pfam" id="PF01149">
    <property type="entry name" value="Fapy_DNA_glyco"/>
    <property type="match status" value="1"/>
</dbReference>
<dbReference type="Pfam" id="PF06831">
    <property type="entry name" value="H2TH"/>
    <property type="match status" value="1"/>
</dbReference>
<dbReference type="Pfam" id="PF06827">
    <property type="entry name" value="zf-FPG_IleRS"/>
    <property type="match status" value="1"/>
</dbReference>
<dbReference type="SMART" id="SM00898">
    <property type="entry name" value="Fapy_DNA_glyco"/>
    <property type="match status" value="1"/>
</dbReference>
<dbReference type="SMART" id="SM01232">
    <property type="entry name" value="H2TH"/>
    <property type="match status" value="1"/>
</dbReference>
<dbReference type="SUPFAM" id="SSF57716">
    <property type="entry name" value="Glucocorticoid receptor-like (DNA-binding domain)"/>
    <property type="match status" value="1"/>
</dbReference>
<dbReference type="SUPFAM" id="SSF81624">
    <property type="entry name" value="N-terminal domain of MutM-like DNA repair proteins"/>
    <property type="match status" value="1"/>
</dbReference>
<dbReference type="SUPFAM" id="SSF46946">
    <property type="entry name" value="S13-like H2TH domain"/>
    <property type="match status" value="1"/>
</dbReference>
<dbReference type="PROSITE" id="PS51068">
    <property type="entry name" value="FPG_CAT"/>
    <property type="match status" value="1"/>
</dbReference>
<dbReference type="PROSITE" id="PS01242">
    <property type="entry name" value="ZF_FPG_1"/>
    <property type="match status" value="1"/>
</dbReference>
<dbReference type="PROSITE" id="PS51066">
    <property type="entry name" value="ZF_FPG_2"/>
    <property type="match status" value="1"/>
</dbReference>
<accession>Q8P250</accession>
<comment type="function">
    <text evidence="2">Involved in base excision repair of DNA damaged by oxidation or by mutagenic agents. Acts as a DNA glycosylase that recognizes and removes damaged bases. Has a preference for oxidized purines, such as 7,8-dihydro-8-oxoguanine (8-oxoG). Has AP (apurinic/apyrimidinic) lyase activity and introduces nicks in the DNA strand. Cleaves the DNA backbone by beta-delta elimination to generate a single-strand break at the site of the removed base with both 3'- and 5'-phosphates.</text>
</comment>
<comment type="catalytic activity">
    <reaction evidence="2">
        <text>Hydrolysis of DNA containing ring-opened 7-methylguanine residues, releasing 2,6-diamino-4-hydroxy-5-(N-methyl)formamidopyrimidine.</text>
        <dbReference type="EC" id="3.2.2.23"/>
    </reaction>
</comment>
<comment type="catalytic activity">
    <reaction evidence="2">
        <text>2'-deoxyribonucleotide-(2'-deoxyribose 5'-phosphate)-2'-deoxyribonucleotide-DNA = a 3'-end 2'-deoxyribonucleotide-(2,3-dehydro-2,3-deoxyribose 5'-phosphate)-DNA + a 5'-end 5'-phospho-2'-deoxyribonucleoside-DNA + H(+)</text>
        <dbReference type="Rhea" id="RHEA:66592"/>
        <dbReference type="Rhea" id="RHEA-COMP:13180"/>
        <dbReference type="Rhea" id="RHEA-COMP:16897"/>
        <dbReference type="Rhea" id="RHEA-COMP:17067"/>
        <dbReference type="ChEBI" id="CHEBI:15378"/>
        <dbReference type="ChEBI" id="CHEBI:136412"/>
        <dbReference type="ChEBI" id="CHEBI:157695"/>
        <dbReference type="ChEBI" id="CHEBI:167181"/>
        <dbReference type="EC" id="4.2.99.18"/>
    </reaction>
</comment>
<comment type="cofactor">
    <cofactor evidence="2">
        <name>Zn(2+)</name>
        <dbReference type="ChEBI" id="CHEBI:29105"/>
    </cofactor>
    <text evidence="2">Binds 1 zinc ion per subunit.</text>
</comment>
<comment type="subunit">
    <text evidence="2">Monomer.</text>
</comment>
<comment type="similarity">
    <text evidence="2">Belongs to the FPG family.</text>
</comment>
<protein>
    <recommendedName>
        <fullName evidence="2">Formamidopyrimidine-DNA glycosylase</fullName>
        <shortName evidence="2">Fapy-DNA glycosylase</shortName>
        <ecNumber evidence="2">3.2.2.23</ecNumber>
    </recommendedName>
    <alternativeName>
        <fullName evidence="2">DNA-(apurinic or apyrimidinic site) lyase MutM</fullName>
        <shortName evidence="2">AP lyase MutM</shortName>
        <ecNumber evidence="2">4.2.99.18</ecNumber>
    </alternativeName>
</protein>
<evidence type="ECO:0000250" key="1"/>
<evidence type="ECO:0000255" key="2">
    <source>
        <dbReference type="HAMAP-Rule" id="MF_00103"/>
    </source>
</evidence>
<gene>
    <name evidence="2" type="primary">mutM</name>
    <name evidence="2" type="synonym">fpg</name>
    <name type="ordered locus">spyM18_0555</name>
</gene>
<sequence length="275" mass="30686">MPELPEVETVRRGLETLVLGQEIVAVTLKVPKMVKTDLETFALTLPGQIIQSVGRRGKYLLIDLGQLVLVSHLRMEGKYLLFPDEVPDNKHFHVFFELKNGSTLVYQDVRKFGTFDLIAKSQLSAFFAKRKLGPEPKKETFKLKTFEAALLSSQKPIKPHLLDQTLVAGLGNIYVDEVLWAAKVHPETASSRLNKAEIKRLHDETIRILALGIEKGGSTVRTYRNALGADGTMQDYLQVYGQTGKPCPRCGQAIVKLKVGGRGTHICPKCQKKRP</sequence>
<feature type="initiator methionine" description="Removed" evidence="1">
    <location>
        <position position="1"/>
    </location>
</feature>
<feature type="chain" id="PRO_0000170874" description="Formamidopyrimidine-DNA glycosylase">
    <location>
        <begin position="2"/>
        <end position="275"/>
    </location>
</feature>
<feature type="zinc finger region" description="FPG-type" evidence="2">
    <location>
        <begin position="238"/>
        <end position="272"/>
    </location>
</feature>
<feature type="active site" description="Schiff-base intermediate with DNA" evidence="2">
    <location>
        <position position="2"/>
    </location>
</feature>
<feature type="active site" description="Proton donor" evidence="2">
    <location>
        <position position="3"/>
    </location>
</feature>
<feature type="active site" description="Proton donor; for beta-elimination activity" evidence="2">
    <location>
        <position position="58"/>
    </location>
</feature>
<feature type="active site" description="Proton donor; for delta-elimination activity" evidence="2">
    <location>
        <position position="262"/>
    </location>
</feature>
<feature type="binding site" evidence="2">
    <location>
        <position position="91"/>
    </location>
    <ligand>
        <name>DNA</name>
        <dbReference type="ChEBI" id="CHEBI:16991"/>
    </ligand>
</feature>
<feature type="binding site" evidence="2">
    <location>
        <position position="110"/>
    </location>
    <ligand>
        <name>DNA</name>
        <dbReference type="ChEBI" id="CHEBI:16991"/>
    </ligand>
</feature>